<gene>
    <name evidence="1" type="primary">argH</name>
    <name type="ordered locus">Ccur92_05460</name>
    <name type="ORF">CCV52592_0522</name>
</gene>
<name>ARLY_CAMC5</name>
<dbReference type="EC" id="4.3.2.1" evidence="1"/>
<dbReference type="EMBL" id="CP000767">
    <property type="protein sequence ID" value="EAU00753.1"/>
    <property type="molecule type" value="Genomic_DNA"/>
</dbReference>
<dbReference type="RefSeq" id="WP_011992025.1">
    <property type="nucleotide sequence ID" value="NC_009715.2"/>
</dbReference>
<dbReference type="SMR" id="A7GXA8"/>
<dbReference type="STRING" id="360105.CCV52592_0522"/>
<dbReference type="KEGG" id="ccv:CCV52592_0522"/>
<dbReference type="HOGENOM" id="CLU_027272_2_3_7"/>
<dbReference type="OrthoDB" id="9769623at2"/>
<dbReference type="UniPathway" id="UPA00068">
    <property type="reaction ID" value="UER00114"/>
</dbReference>
<dbReference type="Proteomes" id="UP000006380">
    <property type="component" value="Chromosome"/>
</dbReference>
<dbReference type="GO" id="GO:0005829">
    <property type="term" value="C:cytosol"/>
    <property type="evidence" value="ECO:0007669"/>
    <property type="project" value="TreeGrafter"/>
</dbReference>
<dbReference type="GO" id="GO:0004056">
    <property type="term" value="F:argininosuccinate lyase activity"/>
    <property type="evidence" value="ECO:0007669"/>
    <property type="project" value="UniProtKB-UniRule"/>
</dbReference>
<dbReference type="GO" id="GO:0042450">
    <property type="term" value="P:arginine biosynthetic process via ornithine"/>
    <property type="evidence" value="ECO:0007669"/>
    <property type="project" value="InterPro"/>
</dbReference>
<dbReference type="GO" id="GO:0006526">
    <property type="term" value="P:L-arginine biosynthetic process"/>
    <property type="evidence" value="ECO:0007669"/>
    <property type="project" value="UniProtKB-UniRule"/>
</dbReference>
<dbReference type="CDD" id="cd01359">
    <property type="entry name" value="Argininosuccinate_lyase"/>
    <property type="match status" value="1"/>
</dbReference>
<dbReference type="FunFam" id="1.10.275.10:FF:000002">
    <property type="entry name" value="Argininosuccinate lyase"/>
    <property type="match status" value="1"/>
</dbReference>
<dbReference type="FunFam" id="1.10.40.30:FF:000001">
    <property type="entry name" value="Argininosuccinate lyase"/>
    <property type="match status" value="1"/>
</dbReference>
<dbReference type="FunFam" id="1.20.200.10:FF:000002">
    <property type="entry name" value="Argininosuccinate lyase"/>
    <property type="match status" value="1"/>
</dbReference>
<dbReference type="Gene3D" id="1.10.40.30">
    <property type="entry name" value="Fumarase/aspartase (C-terminal domain)"/>
    <property type="match status" value="1"/>
</dbReference>
<dbReference type="Gene3D" id="1.20.200.10">
    <property type="entry name" value="Fumarase/aspartase (Central domain)"/>
    <property type="match status" value="1"/>
</dbReference>
<dbReference type="Gene3D" id="1.10.275.10">
    <property type="entry name" value="Fumarase/aspartase (N-terminal domain)"/>
    <property type="match status" value="1"/>
</dbReference>
<dbReference type="HAMAP" id="MF_00006">
    <property type="entry name" value="Arg_succ_lyase"/>
    <property type="match status" value="1"/>
</dbReference>
<dbReference type="InterPro" id="IPR029419">
    <property type="entry name" value="Arg_succ_lyase_C"/>
</dbReference>
<dbReference type="InterPro" id="IPR009049">
    <property type="entry name" value="Argininosuccinate_lyase"/>
</dbReference>
<dbReference type="InterPro" id="IPR024083">
    <property type="entry name" value="Fumarase/histidase_N"/>
</dbReference>
<dbReference type="InterPro" id="IPR020557">
    <property type="entry name" value="Fumarate_lyase_CS"/>
</dbReference>
<dbReference type="InterPro" id="IPR000362">
    <property type="entry name" value="Fumarate_lyase_fam"/>
</dbReference>
<dbReference type="InterPro" id="IPR022761">
    <property type="entry name" value="Fumarate_lyase_N"/>
</dbReference>
<dbReference type="InterPro" id="IPR008948">
    <property type="entry name" value="L-Aspartase-like"/>
</dbReference>
<dbReference type="NCBIfam" id="TIGR00838">
    <property type="entry name" value="argH"/>
    <property type="match status" value="1"/>
</dbReference>
<dbReference type="PANTHER" id="PTHR43814">
    <property type="entry name" value="ARGININOSUCCINATE LYASE"/>
    <property type="match status" value="1"/>
</dbReference>
<dbReference type="PANTHER" id="PTHR43814:SF1">
    <property type="entry name" value="ARGININOSUCCINATE LYASE"/>
    <property type="match status" value="1"/>
</dbReference>
<dbReference type="Pfam" id="PF14698">
    <property type="entry name" value="ASL_C2"/>
    <property type="match status" value="1"/>
</dbReference>
<dbReference type="Pfam" id="PF00206">
    <property type="entry name" value="Lyase_1"/>
    <property type="match status" value="1"/>
</dbReference>
<dbReference type="PRINTS" id="PR00145">
    <property type="entry name" value="ARGSUCLYASE"/>
</dbReference>
<dbReference type="PRINTS" id="PR00149">
    <property type="entry name" value="FUMRATELYASE"/>
</dbReference>
<dbReference type="SUPFAM" id="SSF48557">
    <property type="entry name" value="L-aspartase-like"/>
    <property type="match status" value="1"/>
</dbReference>
<dbReference type="PROSITE" id="PS00163">
    <property type="entry name" value="FUMARATE_LYASES"/>
    <property type="match status" value="1"/>
</dbReference>
<comment type="catalytic activity">
    <reaction evidence="1">
        <text>2-(N(omega)-L-arginino)succinate = fumarate + L-arginine</text>
        <dbReference type="Rhea" id="RHEA:24020"/>
        <dbReference type="ChEBI" id="CHEBI:29806"/>
        <dbReference type="ChEBI" id="CHEBI:32682"/>
        <dbReference type="ChEBI" id="CHEBI:57472"/>
        <dbReference type="EC" id="4.3.2.1"/>
    </reaction>
</comment>
<comment type="pathway">
    <text evidence="1">Amino-acid biosynthesis; L-arginine biosynthesis; L-arginine from L-ornithine and carbamoyl phosphate: step 3/3.</text>
</comment>
<comment type="subcellular location">
    <subcellularLocation>
        <location evidence="1">Cytoplasm</location>
    </subcellularLocation>
</comment>
<comment type="similarity">
    <text evidence="1">Belongs to the lyase 1 family. Argininosuccinate lyase subfamily.</text>
</comment>
<organism>
    <name type="scientific">Campylobacter curvus (strain 525.92)</name>
    <dbReference type="NCBI Taxonomy" id="360105"/>
    <lineage>
        <taxon>Bacteria</taxon>
        <taxon>Pseudomonadati</taxon>
        <taxon>Campylobacterota</taxon>
        <taxon>Epsilonproteobacteria</taxon>
        <taxon>Campylobacterales</taxon>
        <taxon>Campylobacteraceae</taxon>
        <taxon>Campylobacter</taxon>
    </lineage>
</organism>
<keyword id="KW-0028">Amino-acid biosynthesis</keyword>
<keyword id="KW-0055">Arginine biosynthesis</keyword>
<keyword id="KW-0963">Cytoplasm</keyword>
<keyword id="KW-0456">Lyase</keyword>
<keyword id="KW-1185">Reference proteome</keyword>
<reference key="1">
    <citation type="submission" date="2007-07" db="EMBL/GenBank/DDBJ databases">
        <title>Genome sequence of Campylobacter curvus 525.92 isolated from human feces.</title>
        <authorList>
            <person name="Fouts D.E."/>
            <person name="Mongodin E.F."/>
            <person name="Puiu D."/>
            <person name="Sebastian Y."/>
            <person name="Miller W.G."/>
            <person name="Mandrell R.E."/>
            <person name="Lastovica A.J."/>
            <person name="Nelson K.E."/>
        </authorList>
    </citation>
    <scope>NUCLEOTIDE SEQUENCE [LARGE SCALE GENOMIC DNA]</scope>
    <source>
        <strain>525.92</strain>
    </source>
</reference>
<proteinExistence type="inferred from homology"/>
<evidence type="ECO:0000255" key="1">
    <source>
        <dbReference type="HAMAP-Rule" id="MF_00006"/>
    </source>
</evidence>
<sequence length="467" mass="51497">MQESLKKMWSGRFSGESSELLEEFNASIGFDKNLYREDIAGSKAHAKMLGACGILKPEEAAAIVAGLDAVLAQIEEGKFEFKTADEDIHMAVEKRLSELIGSELGGRLHTARSRNDQVALDFRLYVLRQNEQIARQIREFIATLTSLASAHLDTLMPGYTHLQHAQPVSLAYHLLAYAFMFKRDFERFISSHERNNLCPLGSAALAGTPHPIRRELVAQELNFAGITQNAMDSVSDRDFALEILFNISVLMTHASRLCEELILWSSQEFGFVTISDAYSTGSSIMPQKKNPDVAELIRGKTGRANGNLIALLTTMKGLPLAYNKDMQEDKEGVFDSVRTATSSLAILNAMMKEAKFNEQNMLAATKKGHLSATDLADYLVREKNVPFRTAHFITGKAVAHAENLGVDLSELDAAQLKSVDENLDENAVKFLNLHASKEARTSAGGTANASVRKQIEELESWLSKSGD</sequence>
<protein>
    <recommendedName>
        <fullName evidence="1">Argininosuccinate lyase</fullName>
        <shortName evidence="1">ASAL</shortName>
        <ecNumber evidence="1">4.3.2.1</ecNumber>
    </recommendedName>
    <alternativeName>
        <fullName evidence="1">Arginosuccinase</fullName>
    </alternativeName>
</protein>
<feature type="chain" id="PRO_0000321434" description="Argininosuccinate lyase">
    <location>
        <begin position="1"/>
        <end position="467"/>
    </location>
</feature>
<accession>A7GXA8</accession>